<sequence length="185" mass="20400">MAEYDADVPAGIVMTSMEAIVGWLRKTSFWPLTMGLACCAIEMISYGGPRADAARWGHEVFRASPRQADLMIVSGRVSQKMAPVVRQLYDQMPEPKWVISMGACASSGGIFNNYAVVQGCDHIVPVDVYLPGCPPSPDMLIDAVFKIREQIQHWPLMGHMSEVEAAKEKKALDAKTTLEQKGLMR</sequence>
<dbReference type="EC" id="7.1.1.-" evidence="1"/>
<dbReference type="EMBL" id="AE017283">
    <property type="protein sequence ID" value="AAT83654.1"/>
    <property type="molecule type" value="Genomic_DNA"/>
</dbReference>
<dbReference type="SMR" id="Q6A6F9"/>
<dbReference type="EnsemblBacteria" id="AAT83654">
    <property type="protein sequence ID" value="AAT83654"/>
    <property type="gene ID" value="PPA1935"/>
</dbReference>
<dbReference type="KEGG" id="pac:PPA1935"/>
<dbReference type="eggNOG" id="COG0377">
    <property type="taxonomic scope" value="Bacteria"/>
</dbReference>
<dbReference type="HOGENOM" id="CLU_055737_7_3_11"/>
<dbReference type="Proteomes" id="UP000000603">
    <property type="component" value="Chromosome"/>
</dbReference>
<dbReference type="GO" id="GO:0005886">
    <property type="term" value="C:plasma membrane"/>
    <property type="evidence" value="ECO:0007669"/>
    <property type="project" value="UniProtKB-SubCell"/>
</dbReference>
<dbReference type="GO" id="GO:0045271">
    <property type="term" value="C:respiratory chain complex I"/>
    <property type="evidence" value="ECO:0007669"/>
    <property type="project" value="TreeGrafter"/>
</dbReference>
<dbReference type="GO" id="GO:0051539">
    <property type="term" value="F:4 iron, 4 sulfur cluster binding"/>
    <property type="evidence" value="ECO:0007669"/>
    <property type="project" value="UniProtKB-KW"/>
</dbReference>
<dbReference type="GO" id="GO:0005506">
    <property type="term" value="F:iron ion binding"/>
    <property type="evidence" value="ECO:0007669"/>
    <property type="project" value="UniProtKB-UniRule"/>
</dbReference>
<dbReference type="GO" id="GO:0008137">
    <property type="term" value="F:NADH dehydrogenase (ubiquinone) activity"/>
    <property type="evidence" value="ECO:0007669"/>
    <property type="project" value="InterPro"/>
</dbReference>
<dbReference type="GO" id="GO:0050136">
    <property type="term" value="F:NADH:ubiquinone reductase (non-electrogenic) activity"/>
    <property type="evidence" value="ECO:0007669"/>
    <property type="project" value="UniProtKB-UniRule"/>
</dbReference>
<dbReference type="GO" id="GO:0048038">
    <property type="term" value="F:quinone binding"/>
    <property type="evidence" value="ECO:0007669"/>
    <property type="project" value="UniProtKB-KW"/>
</dbReference>
<dbReference type="GO" id="GO:0009060">
    <property type="term" value="P:aerobic respiration"/>
    <property type="evidence" value="ECO:0007669"/>
    <property type="project" value="TreeGrafter"/>
</dbReference>
<dbReference type="GO" id="GO:0015990">
    <property type="term" value="P:electron transport coupled proton transport"/>
    <property type="evidence" value="ECO:0007669"/>
    <property type="project" value="TreeGrafter"/>
</dbReference>
<dbReference type="FunFam" id="3.40.50.12280:FF:000004">
    <property type="entry name" value="NADH-quinone oxidoreductase subunit B"/>
    <property type="match status" value="1"/>
</dbReference>
<dbReference type="Gene3D" id="3.40.50.12280">
    <property type="match status" value="1"/>
</dbReference>
<dbReference type="HAMAP" id="MF_01356">
    <property type="entry name" value="NDH1_NuoB"/>
    <property type="match status" value="1"/>
</dbReference>
<dbReference type="InterPro" id="IPR006137">
    <property type="entry name" value="NADH_UbQ_OxRdtase-like_20kDa"/>
</dbReference>
<dbReference type="InterPro" id="IPR006138">
    <property type="entry name" value="NADH_UQ_OxRdtase_20Kd_su"/>
</dbReference>
<dbReference type="NCBIfam" id="TIGR01957">
    <property type="entry name" value="nuoB_fam"/>
    <property type="match status" value="1"/>
</dbReference>
<dbReference type="NCBIfam" id="NF005012">
    <property type="entry name" value="PRK06411.1"/>
    <property type="match status" value="1"/>
</dbReference>
<dbReference type="PANTHER" id="PTHR11995">
    <property type="entry name" value="NADH DEHYDROGENASE"/>
    <property type="match status" value="1"/>
</dbReference>
<dbReference type="PANTHER" id="PTHR11995:SF14">
    <property type="entry name" value="NADH DEHYDROGENASE [UBIQUINONE] IRON-SULFUR PROTEIN 7, MITOCHONDRIAL"/>
    <property type="match status" value="1"/>
</dbReference>
<dbReference type="Pfam" id="PF01058">
    <property type="entry name" value="Oxidored_q6"/>
    <property type="match status" value="1"/>
</dbReference>
<dbReference type="SUPFAM" id="SSF56770">
    <property type="entry name" value="HydA/Nqo6-like"/>
    <property type="match status" value="1"/>
</dbReference>
<dbReference type="PROSITE" id="PS01150">
    <property type="entry name" value="COMPLEX1_20K"/>
    <property type="match status" value="1"/>
</dbReference>
<protein>
    <recommendedName>
        <fullName evidence="1">NADH-quinone oxidoreductase subunit B</fullName>
        <ecNumber evidence="1">7.1.1.-</ecNumber>
    </recommendedName>
    <alternativeName>
        <fullName evidence="1">NADH dehydrogenase I subunit B</fullName>
    </alternativeName>
    <alternativeName>
        <fullName evidence="1">NDH-1 subunit B</fullName>
    </alternativeName>
</protein>
<reference key="1">
    <citation type="journal article" date="2004" name="Science">
        <title>The complete genome sequence of Propionibacterium acnes, a commensal of human skin.</title>
        <authorList>
            <person name="Brueggemann H."/>
            <person name="Henne A."/>
            <person name="Hoster F."/>
            <person name="Liesegang H."/>
            <person name="Wiezer A."/>
            <person name="Strittmatter A."/>
            <person name="Hujer S."/>
            <person name="Duerre P."/>
            <person name="Gottschalk G."/>
        </authorList>
    </citation>
    <scope>NUCLEOTIDE SEQUENCE [LARGE SCALE GENOMIC DNA]</scope>
    <source>
        <strain>DSM 16379 / KPA171202</strain>
    </source>
</reference>
<comment type="function">
    <text evidence="1">NDH-1 shuttles electrons from NADH, via FMN and iron-sulfur (Fe-S) centers, to quinones in the respiratory chain. The immediate electron acceptor for the enzyme in this species is believed to be a menaquinone. Couples the redox reaction to proton translocation (for every two electrons transferred, four hydrogen ions are translocated across the cytoplasmic membrane), and thus conserves the redox energy in a proton gradient.</text>
</comment>
<comment type="catalytic activity">
    <reaction evidence="1">
        <text>a quinone + NADH + 5 H(+)(in) = a quinol + NAD(+) + 4 H(+)(out)</text>
        <dbReference type="Rhea" id="RHEA:57888"/>
        <dbReference type="ChEBI" id="CHEBI:15378"/>
        <dbReference type="ChEBI" id="CHEBI:24646"/>
        <dbReference type="ChEBI" id="CHEBI:57540"/>
        <dbReference type="ChEBI" id="CHEBI:57945"/>
        <dbReference type="ChEBI" id="CHEBI:132124"/>
    </reaction>
</comment>
<comment type="cofactor">
    <cofactor evidence="1">
        <name>[4Fe-4S] cluster</name>
        <dbReference type="ChEBI" id="CHEBI:49883"/>
    </cofactor>
    <text evidence="1">Binds 1 [4Fe-4S] cluster.</text>
</comment>
<comment type="subunit">
    <text evidence="1">NDH-1 is composed of 14 different subunits. Subunits NuoB, C, D, E, F, and G constitute the peripheral sector of the complex.</text>
</comment>
<comment type="subcellular location">
    <subcellularLocation>
        <location evidence="1">Cell membrane</location>
        <topology evidence="1">Peripheral membrane protein</topology>
        <orientation evidence="1">Cytoplasmic side</orientation>
    </subcellularLocation>
</comment>
<comment type="similarity">
    <text evidence="1">Belongs to the complex I 20 kDa subunit family.</text>
</comment>
<proteinExistence type="inferred from homology"/>
<feature type="chain" id="PRO_0000376303" description="NADH-quinone oxidoreductase subunit B">
    <location>
        <begin position="1"/>
        <end position="185"/>
    </location>
</feature>
<feature type="binding site" evidence="1">
    <location>
        <position position="38"/>
    </location>
    <ligand>
        <name>[4Fe-4S] cluster</name>
        <dbReference type="ChEBI" id="CHEBI:49883"/>
    </ligand>
</feature>
<feature type="binding site" evidence="1">
    <location>
        <position position="39"/>
    </location>
    <ligand>
        <name>[4Fe-4S] cluster</name>
        <dbReference type="ChEBI" id="CHEBI:49883"/>
    </ligand>
</feature>
<feature type="binding site" evidence="1">
    <location>
        <position position="104"/>
    </location>
    <ligand>
        <name>[4Fe-4S] cluster</name>
        <dbReference type="ChEBI" id="CHEBI:49883"/>
    </ligand>
</feature>
<feature type="binding site" evidence="1">
    <location>
        <position position="133"/>
    </location>
    <ligand>
        <name>[4Fe-4S] cluster</name>
        <dbReference type="ChEBI" id="CHEBI:49883"/>
    </ligand>
</feature>
<accession>Q6A6F9</accession>
<keyword id="KW-0004">4Fe-4S</keyword>
<keyword id="KW-1003">Cell membrane</keyword>
<keyword id="KW-0408">Iron</keyword>
<keyword id="KW-0411">Iron-sulfur</keyword>
<keyword id="KW-0472">Membrane</keyword>
<keyword id="KW-0479">Metal-binding</keyword>
<keyword id="KW-0520">NAD</keyword>
<keyword id="KW-0874">Quinone</keyword>
<keyword id="KW-1278">Translocase</keyword>
<keyword id="KW-0813">Transport</keyword>
<gene>
    <name evidence="1" type="primary">nuoB</name>
    <name type="ordered locus">PPA1935</name>
</gene>
<name>NUOB_CUTAK</name>
<organism>
    <name type="scientific">Cutibacterium acnes (strain DSM 16379 / KPA171202)</name>
    <name type="common">Propionibacterium acnes</name>
    <dbReference type="NCBI Taxonomy" id="267747"/>
    <lineage>
        <taxon>Bacteria</taxon>
        <taxon>Bacillati</taxon>
        <taxon>Actinomycetota</taxon>
        <taxon>Actinomycetes</taxon>
        <taxon>Propionibacteriales</taxon>
        <taxon>Propionibacteriaceae</taxon>
        <taxon>Cutibacterium</taxon>
    </lineage>
</organism>
<evidence type="ECO:0000255" key="1">
    <source>
        <dbReference type="HAMAP-Rule" id="MF_01356"/>
    </source>
</evidence>